<organism>
    <name type="scientific">Streptococcus pneumoniae serotype 2 (strain D39 / NCTC 7466)</name>
    <dbReference type="NCBI Taxonomy" id="373153"/>
    <lineage>
        <taxon>Bacteria</taxon>
        <taxon>Bacillati</taxon>
        <taxon>Bacillota</taxon>
        <taxon>Bacilli</taxon>
        <taxon>Lactobacillales</taxon>
        <taxon>Streptococcaceae</taxon>
        <taxon>Streptococcus</taxon>
    </lineage>
</organism>
<reference key="1">
    <citation type="journal article" date="2007" name="J. Bacteriol.">
        <title>Genome sequence of Avery's virulent serotype 2 strain D39 of Streptococcus pneumoniae and comparison with that of unencapsulated laboratory strain R6.</title>
        <authorList>
            <person name="Lanie J.A."/>
            <person name="Ng W.-L."/>
            <person name="Kazmierczak K.M."/>
            <person name="Andrzejewski T.M."/>
            <person name="Davidsen T.M."/>
            <person name="Wayne K.J."/>
            <person name="Tettelin H."/>
            <person name="Glass J.I."/>
            <person name="Winkler M.E."/>
        </authorList>
    </citation>
    <scope>NUCLEOTIDE SEQUENCE [LARGE SCALE GENOMIC DNA]</scope>
    <source>
        <strain>D39 / NCTC 7466</strain>
    </source>
</reference>
<gene>
    <name evidence="1" type="primary">fni</name>
    <name type="ordered locus">SPD_0349</name>
</gene>
<feature type="chain" id="PRO_1000048460" description="Isopentenyl-diphosphate delta-isomerase">
    <location>
        <begin position="1"/>
        <end position="336"/>
    </location>
</feature>
<feature type="binding site" evidence="1">
    <location>
        <begin position="5"/>
        <end position="6"/>
    </location>
    <ligand>
        <name>substrate</name>
    </ligand>
</feature>
<feature type="binding site" evidence="1">
    <location>
        <begin position="60"/>
        <end position="62"/>
    </location>
    <ligand>
        <name>FMN</name>
        <dbReference type="ChEBI" id="CHEBI:58210"/>
    </ligand>
</feature>
<feature type="binding site" evidence="1">
    <location>
        <position position="90"/>
    </location>
    <ligand>
        <name>FMN</name>
        <dbReference type="ChEBI" id="CHEBI:58210"/>
    </ligand>
</feature>
<feature type="binding site" evidence="1">
    <location>
        <position position="117"/>
    </location>
    <ligand>
        <name>FMN</name>
        <dbReference type="ChEBI" id="CHEBI:58210"/>
    </ligand>
</feature>
<feature type="binding site" evidence="1">
    <location>
        <position position="147"/>
    </location>
    <ligand>
        <name>substrate</name>
    </ligand>
</feature>
<feature type="binding site" evidence="1">
    <location>
        <position position="148"/>
    </location>
    <ligand>
        <name>Mg(2+)</name>
        <dbReference type="ChEBI" id="CHEBI:18420"/>
    </ligand>
</feature>
<feature type="binding site" evidence="1">
    <location>
        <position position="179"/>
    </location>
    <ligand>
        <name>FMN</name>
        <dbReference type="ChEBI" id="CHEBI:58210"/>
    </ligand>
</feature>
<feature type="binding site" evidence="1">
    <location>
        <position position="204"/>
    </location>
    <ligand>
        <name>FMN</name>
        <dbReference type="ChEBI" id="CHEBI:58210"/>
    </ligand>
</feature>
<feature type="binding site" evidence="1">
    <location>
        <position position="209"/>
    </location>
    <ligand>
        <name>FMN</name>
        <dbReference type="ChEBI" id="CHEBI:58210"/>
    </ligand>
</feature>
<feature type="binding site" evidence="1">
    <location>
        <begin position="253"/>
        <end position="255"/>
    </location>
    <ligand>
        <name>FMN</name>
        <dbReference type="ChEBI" id="CHEBI:58210"/>
    </ligand>
</feature>
<feature type="binding site" evidence="1">
    <location>
        <begin position="274"/>
        <end position="275"/>
    </location>
    <ligand>
        <name>FMN</name>
        <dbReference type="ChEBI" id="CHEBI:58210"/>
    </ligand>
</feature>
<protein>
    <recommendedName>
        <fullName evidence="1">Isopentenyl-diphosphate delta-isomerase</fullName>
        <shortName evidence="1">IPP isomerase</shortName>
        <ecNumber evidence="1">5.3.3.2</ecNumber>
    </recommendedName>
    <alternativeName>
        <fullName evidence="1">Isopentenyl diphosphate:dimethylallyl diphosphate isomerase</fullName>
    </alternativeName>
    <alternativeName>
        <fullName evidence="1">Isopentenyl pyrophosphate isomerase</fullName>
    </alternativeName>
    <alternativeName>
        <fullName evidence="1">Type 2 isopentenyl diphosphate isomerase</fullName>
        <shortName evidence="1">IDI-2</shortName>
    </alternativeName>
</protein>
<comment type="function">
    <text evidence="1">Involved in the biosynthesis of isoprenoids. Catalyzes the 1,3-allylic rearrangement of the homoallylic substrate isopentenyl (IPP) to its allylic isomer, dimethylallyl diphosphate (DMAPP).</text>
</comment>
<comment type="catalytic activity">
    <reaction evidence="1">
        <text>isopentenyl diphosphate = dimethylallyl diphosphate</text>
        <dbReference type="Rhea" id="RHEA:23284"/>
        <dbReference type="ChEBI" id="CHEBI:57623"/>
        <dbReference type="ChEBI" id="CHEBI:128769"/>
        <dbReference type="EC" id="5.3.3.2"/>
    </reaction>
</comment>
<comment type="cofactor">
    <cofactor evidence="1">
        <name>FMN</name>
        <dbReference type="ChEBI" id="CHEBI:58210"/>
    </cofactor>
</comment>
<comment type="cofactor">
    <cofactor evidence="1">
        <name>NADPH</name>
        <dbReference type="ChEBI" id="CHEBI:57783"/>
    </cofactor>
</comment>
<comment type="cofactor">
    <cofactor evidence="1">
        <name>Mg(2+)</name>
        <dbReference type="ChEBI" id="CHEBI:18420"/>
    </cofactor>
</comment>
<comment type="subunit">
    <text evidence="1">Homooctamer. Dimer of tetramers.</text>
</comment>
<comment type="subcellular location">
    <subcellularLocation>
        <location evidence="1">Cytoplasm</location>
    </subcellularLocation>
</comment>
<comment type="similarity">
    <text evidence="1">Belongs to the IPP isomerase type 2 family.</text>
</comment>
<accession>Q04M86</accession>
<proteinExistence type="inferred from homology"/>
<dbReference type="EC" id="5.3.3.2" evidence="1"/>
<dbReference type="EMBL" id="CP000410">
    <property type="protein sequence ID" value="ABJ54064.1"/>
    <property type="molecule type" value="Genomic_DNA"/>
</dbReference>
<dbReference type="RefSeq" id="WP_000210629.1">
    <property type="nucleotide sequence ID" value="NZ_JAMLJR010000016.1"/>
</dbReference>
<dbReference type="SMR" id="Q04M86"/>
<dbReference type="PaxDb" id="373153-SPD_0349"/>
<dbReference type="KEGG" id="spd:SPD_0349"/>
<dbReference type="eggNOG" id="COG1304">
    <property type="taxonomic scope" value="Bacteria"/>
</dbReference>
<dbReference type="HOGENOM" id="CLU_065515_0_0_9"/>
<dbReference type="BioCyc" id="SPNE373153:G1G6V-383-MONOMER"/>
<dbReference type="Proteomes" id="UP000001452">
    <property type="component" value="Chromosome"/>
</dbReference>
<dbReference type="GO" id="GO:0005737">
    <property type="term" value="C:cytoplasm"/>
    <property type="evidence" value="ECO:0007669"/>
    <property type="project" value="UniProtKB-SubCell"/>
</dbReference>
<dbReference type="GO" id="GO:0010181">
    <property type="term" value="F:FMN binding"/>
    <property type="evidence" value="ECO:0007669"/>
    <property type="project" value="UniProtKB-UniRule"/>
</dbReference>
<dbReference type="GO" id="GO:0004452">
    <property type="term" value="F:isopentenyl-diphosphate delta-isomerase activity"/>
    <property type="evidence" value="ECO:0007669"/>
    <property type="project" value="UniProtKB-UniRule"/>
</dbReference>
<dbReference type="GO" id="GO:0000287">
    <property type="term" value="F:magnesium ion binding"/>
    <property type="evidence" value="ECO:0007669"/>
    <property type="project" value="UniProtKB-UniRule"/>
</dbReference>
<dbReference type="GO" id="GO:0070402">
    <property type="term" value="F:NADPH binding"/>
    <property type="evidence" value="ECO:0007669"/>
    <property type="project" value="UniProtKB-UniRule"/>
</dbReference>
<dbReference type="GO" id="GO:0016491">
    <property type="term" value="F:oxidoreductase activity"/>
    <property type="evidence" value="ECO:0007669"/>
    <property type="project" value="InterPro"/>
</dbReference>
<dbReference type="GO" id="GO:0008299">
    <property type="term" value="P:isoprenoid biosynthetic process"/>
    <property type="evidence" value="ECO:0007669"/>
    <property type="project" value="UniProtKB-UniRule"/>
</dbReference>
<dbReference type="CDD" id="cd02811">
    <property type="entry name" value="IDI-2_FMN"/>
    <property type="match status" value="1"/>
</dbReference>
<dbReference type="Gene3D" id="3.20.20.70">
    <property type="entry name" value="Aldolase class I"/>
    <property type="match status" value="1"/>
</dbReference>
<dbReference type="HAMAP" id="MF_00354">
    <property type="entry name" value="Idi_2"/>
    <property type="match status" value="1"/>
</dbReference>
<dbReference type="InterPro" id="IPR013785">
    <property type="entry name" value="Aldolase_TIM"/>
</dbReference>
<dbReference type="InterPro" id="IPR000262">
    <property type="entry name" value="FMN-dep_DH"/>
</dbReference>
<dbReference type="InterPro" id="IPR011179">
    <property type="entry name" value="IPdP_isomerase"/>
</dbReference>
<dbReference type="NCBIfam" id="TIGR02151">
    <property type="entry name" value="IPP_isom_2"/>
    <property type="match status" value="1"/>
</dbReference>
<dbReference type="PANTHER" id="PTHR43665">
    <property type="entry name" value="ISOPENTENYL-DIPHOSPHATE DELTA-ISOMERASE"/>
    <property type="match status" value="1"/>
</dbReference>
<dbReference type="PANTHER" id="PTHR43665:SF1">
    <property type="entry name" value="ISOPENTENYL-DIPHOSPHATE DELTA-ISOMERASE"/>
    <property type="match status" value="1"/>
</dbReference>
<dbReference type="Pfam" id="PF01070">
    <property type="entry name" value="FMN_dh"/>
    <property type="match status" value="1"/>
</dbReference>
<dbReference type="PIRSF" id="PIRSF003314">
    <property type="entry name" value="IPP_isomerase"/>
    <property type="match status" value="1"/>
</dbReference>
<dbReference type="SUPFAM" id="SSF51395">
    <property type="entry name" value="FMN-linked oxidoreductases"/>
    <property type="match status" value="1"/>
</dbReference>
<name>IDI2_STRP2</name>
<keyword id="KW-0963">Cytoplasm</keyword>
<keyword id="KW-0285">Flavoprotein</keyword>
<keyword id="KW-0288">FMN</keyword>
<keyword id="KW-0413">Isomerase</keyword>
<keyword id="KW-0414">Isoprene biosynthesis</keyword>
<keyword id="KW-0460">Magnesium</keyword>
<keyword id="KW-0479">Metal-binding</keyword>
<keyword id="KW-0521">NADP</keyword>
<keyword id="KW-1185">Reference proteome</keyword>
<sequence length="336" mass="37687">MTTNRKDEHILYALEQKSSYNSFDEVELIHSSLPLYNLDEIDLSTEFAGRKWDFPFYINAMTGGSNKGREINQKLAQVAETCGILFVTGSYSAALKNPTDDSFSVKSSHPNLLLGTNIGLDKPVELGLQTVEEMNPVLLQVHVNVMQELLMPEGERKFRSWQSHLADYSKQIPVPIVLKEVGFGMDAKTIERAYEFGVRTVDLSGRGGTSFAYIENRRSGQRDYLNQWGQSTMQALLNAQEWKDKVELLVSGGVRNPLDMIKCLVFGAKAVGLSRTVLELVETYTVEEVIGIVQGWKADLRLIMCSLNCATIADLQKVDYLLYGKLKEANDQMKKA</sequence>
<evidence type="ECO:0000255" key="1">
    <source>
        <dbReference type="HAMAP-Rule" id="MF_00354"/>
    </source>
</evidence>